<gene>
    <name evidence="1" type="primary">rpsD</name>
    <name type="ordered locus">PSHAa2807</name>
</gene>
<organism>
    <name type="scientific">Pseudoalteromonas translucida (strain TAC 125)</name>
    <dbReference type="NCBI Taxonomy" id="326442"/>
    <lineage>
        <taxon>Bacteria</taxon>
        <taxon>Pseudomonadati</taxon>
        <taxon>Pseudomonadota</taxon>
        <taxon>Gammaproteobacteria</taxon>
        <taxon>Alteromonadales</taxon>
        <taxon>Pseudoalteromonadaceae</taxon>
        <taxon>Pseudoalteromonas</taxon>
    </lineage>
</organism>
<sequence>MARYLGPKLKLSRREGTDLFLKSGVRAIDSKCKLETAPGQHGARKGRLSDYGLQLREKQKVRRIYGVLEKQFRNYYKEAARLKGNTGENLLQLLEQRLDNVVYRMGFASTRAEARQLVSHKAILVNGRVVNVPSYVIAPEDTVVIREKSKTQARIIAALELAEQREKPTWVEVDGKKLEGSFKRLPERSDLSADINEQLIVELYSK</sequence>
<evidence type="ECO:0000255" key="1">
    <source>
        <dbReference type="HAMAP-Rule" id="MF_01306"/>
    </source>
</evidence>
<evidence type="ECO:0000305" key="2"/>
<keyword id="KW-1185">Reference proteome</keyword>
<keyword id="KW-0687">Ribonucleoprotein</keyword>
<keyword id="KW-0689">Ribosomal protein</keyword>
<keyword id="KW-0694">RNA-binding</keyword>
<keyword id="KW-0699">rRNA-binding</keyword>
<feature type="chain" id="PRO_0000228913" description="Small ribosomal subunit protein uS4">
    <location>
        <begin position="1"/>
        <end position="206"/>
    </location>
</feature>
<feature type="domain" description="S4 RNA-binding" evidence="1">
    <location>
        <begin position="96"/>
        <end position="156"/>
    </location>
</feature>
<comment type="function">
    <text evidence="1">One of the primary rRNA binding proteins, it binds directly to 16S rRNA where it nucleates assembly of the body of the 30S subunit.</text>
</comment>
<comment type="function">
    <text evidence="1">With S5 and S12 plays an important role in translational accuracy.</text>
</comment>
<comment type="subunit">
    <text evidence="1">Part of the 30S ribosomal subunit. Contacts protein S5. The interaction surface between S4 and S5 is involved in control of translational fidelity.</text>
</comment>
<comment type="similarity">
    <text evidence="1">Belongs to the universal ribosomal protein uS4 family.</text>
</comment>
<proteinExistence type="inferred from homology"/>
<dbReference type="EMBL" id="CR954246">
    <property type="protein sequence ID" value="CAI87844.1"/>
    <property type="molecule type" value="Genomic_DNA"/>
</dbReference>
<dbReference type="SMR" id="Q3IJJ5"/>
<dbReference type="STRING" id="326442.PSHAa2807"/>
<dbReference type="KEGG" id="pha:PSHAa2807"/>
<dbReference type="PATRIC" id="fig|326442.8.peg.2705"/>
<dbReference type="eggNOG" id="COG0522">
    <property type="taxonomic scope" value="Bacteria"/>
</dbReference>
<dbReference type="HOGENOM" id="CLU_092403_0_2_6"/>
<dbReference type="BioCyc" id="PHAL326442:PSHA_RS13775-MONOMER"/>
<dbReference type="Proteomes" id="UP000006843">
    <property type="component" value="Chromosome I"/>
</dbReference>
<dbReference type="GO" id="GO:0015935">
    <property type="term" value="C:small ribosomal subunit"/>
    <property type="evidence" value="ECO:0007669"/>
    <property type="project" value="InterPro"/>
</dbReference>
<dbReference type="GO" id="GO:0019843">
    <property type="term" value="F:rRNA binding"/>
    <property type="evidence" value="ECO:0007669"/>
    <property type="project" value="UniProtKB-UniRule"/>
</dbReference>
<dbReference type="GO" id="GO:0003735">
    <property type="term" value="F:structural constituent of ribosome"/>
    <property type="evidence" value="ECO:0007669"/>
    <property type="project" value="InterPro"/>
</dbReference>
<dbReference type="GO" id="GO:0042274">
    <property type="term" value="P:ribosomal small subunit biogenesis"/>
    <property type="evidence" value="ECO:0007669"/>
    <property type="project" value="TreeGrafter"/>
</dbReference>
<dbReference type="GO" id="GO:0006412">
    <property type="term" value="P:translation"/>
    <property type="evidence" value="ECO:0007669"/>
    <property type="project" value="UniProtKB-UniRule"/>
</dbReference>
<dbReference type="CDD" id="cd00165">
    <property type="entry name" value="S4"/>
    <property type="match status" value="1"/>
</dbReference>
<dbReference type="FunFam" id="1.10.1050.10:FF:000001">
    <property type="entry name" value="30S ribosomal protein S4"/>
    <property type="match status" value="1"/>
</dbReference>
<dbReference type="FunFam" id="3.10.290.10:FF:000001">
    <property type="entry name" value="30S ribosomal protein S4"/>
    <property type="match status" value="1"/>
</dbReference>
<dbReference type="Gene3D" id="1.10.1050.10">
    <property type="entry name" value="Ribosomal Protein S4 Delta 41, Chain A, domain 1"/>
    <property type="match status" value="1"/>
</dbReference>
<dbReference type="Gene3D" id="3.10.290.10">
    <property type="entry name" value="RNA-binding S4 domain"/>
    <property type="match status" value="1"/>
</dbReference>
<dbReference type="HAMAP" id="MF_01306_B">
    <property type="entry name" value="Ribosomal_uS4_B"/>
    <property type="match status" value="1"/>
</dbReference>
<dbReference type="InterPro" id="IPR022801">
    <property type="entry name" value="Ribosomal_uS4"/>
</dbReference>
<dbReference type="InterPro" id="IPR005709">
    <property type="entry name" value="Ribosomal_uS4_bac-type"/>
</dbReference>
<dbReference type="InterPro" id="IPR018079">
    <property type="entry name" value="Ribosomal_uS4_CS"/>
</dbReference>
<dbReference type="InterPro" id="IPR001912">
    <property type="entry name" value="Ribosomal_uS4_N"/>
</dbReference>
<dbReference type="InterPro" id="IPR002942">
    <property type="entry name" value="S4_RNA-bd"/>
</dbReference>
<dbReference type="InterPro" id="IPR036986">
    <property type="entry name" value="S4_RNA-bd_sf"/>
</dbReference>
<dbReference type="NCBIfam" id="NF003717">
    <property type="entry name" value="PRK05327.1"/>
    <property type="match status" value="1"/>
</dbReference>
<dbReference type="NCBIfam" id="TIGR01017">
    <property type="entry name" value="rpsD_bact"/>
    <property type="match status" value="1"/>
</dbReference>
<dbReference type="PANTHER" id="PTHR11831">
    <property type="entry name" value="30S 40S RIBOSOMAL PROTEIN"/>
    <property type="match status" value="1"/>
</dbReference>
<dbReference type="PANTHER" id="PTHR11831:SF4">
    <property type="entry name" value="SMALL RIBOSOMAL SUBUNIT PROTEIN US4M"/>
    <property type="match status" value="1"/>
</dbReference>
<dbReference type="Pfam" id="PF00163">
    <property type="entry name" value="Ribosomal_S4"/>
    <property type="match status" value="1"/>
</dbReference>
<dbReference type="Pfam" id="PF01479">
    <property type="entry name" value="S4"/>
    <property type="match status" value="1"/>
</dbReference>
<dbReference type="SMART" id="SM01390">
    <property type="entry name" value="Ribosomal_S4"/>
    <property type="match status" value="1"/>
</dbReference>
<dbReference type="SMART" id="SM00363">
    <property type="entry name" value="S4"/>
    <property type="match status" value="1"/>
</dbReference>
<dbReference type="SUPFAM" id="SSF55174">
    <property type="entry name" value="Alpha-L RNA-binding motif"/>
    <property type="match status" value="1"/>
</dbReference>
<dbReference type="PROSITE" id="PS00632">
    <property type="entry name" value="RIBOSOMAL_S4"/>
    <property type="match status" value="1"/>
</dbReference>
<dbReference type="PROSITE" id="PS50889">
    <property type="entry name" value="S4"/>
    <property type="match status" value="1"/>
</dbReference>
<protein>
    <recommendedName>
        <fullName evidence="1">Small ribosomal subunit protein uS4</fullName>
    </recommendedName>
    <alternativeName>
        <fullName evidence="2">30S ribosomal protein S4</fullName>
    </alternativeName>
</protein>
<accession>Q3IJJ5</accession>
<reference key="1">
    <citation type="journal article" date="2005" name="Genome Res.">
        <title>Coping with cold: the genome of the versatile marine Antarctica bacterium Pseudoalteromonas haloplanktis TAC125.</title>
        <authorList>
            <person name="Medigue C."/>
            <person name="Krin E."/>
            <person name="Pascal G."/>
            <person name="Barbe V."/>
            <person name="Bernsel A."/>
            <person name="Bertin P.N."/>
            <person name="Cheung F."/>
            <person name="Cruveiller S."/>
            <person name="D'Amico S."/>
            <person name="Duilio A."/>
            <person name="Fang G."/>
            <person name="Feller G."/>
            <person name="Ho C."/>
            <person name="Mangenot S."/>
            <person name="Marino G."/>
            <person name="Nilsson J."/>
            <person name="Parrilli E."/>
            <person name="Rocha E.P.C."/>
            <person name="Rouy Z."/>
            <person name="Sekowska A."/>
            <person name="Tutino M.L."/>
            <person name="Vallenet D."/>
            <person name="von Heijne G."/>
            <person name="Danchin A."/>
        </authorList>
    </citation>
    <scope>NUCLEOTIDE SEQUENCE [LARGE SCALE GENOMIC DNA]</scope>
    <source>
        <strain>TAC 125</strain>
    </source>
</reference>
<name>RS4_PSET1</name>